<keyword id="KW-1015">Disulfide bond</keyword>
<keyword id="KW-0372">Hormone</keyword>
<keyword id="KW-0964">Secreted</keyword>
<keyword id="KW-0732">Signal</keyword>
<keyword id="KW-0800">Toxin</keyword>
<accession>A0A0F7YZI5</accession>
<proteinExistence type="evidence at transcript level"/>
<dbReference type="EMBL" id="GAIH01000106">
    <property type="protein sequence ID" value="JAI08983.1"/>
    <property type="molecule type" value="mRNA"/>
</dbReference>
<dbReference type="GO" id="GO:0005737">
    <property type="term" value="C:cytoplasm"/>
    <property type="evidence" value="ECO:0007669"/>
    <property type="project" value="TreeGrafter"/>
</dbReference>
<dbReference type="GO" id="GO:0005615">
    <property type="term" value="C:extracellular space"/>
    <property type="evidence" value="ECO:0007669"/>
    <property type="project" value="TreeGrafter"/>
</dbReference>
<dbReference type="GO" id="GO:0005179">
    <property type="term" value="F:hormone activity"/>
    <property type="evidence" value="ECO:0007669"/>
    <property type="project" value="UniProtKB-KW"/>
</dbReference>
<dbReference type="GO" id="GO:0090729">
    <property type="term" value="F:toxin activity"/>
    <property type="evidence" value="ECO:0007669"/>
    <property type="project" value="UniProtKB-KW"/>
</dbReference>
<dbReference type="GO" id="GO:0007186">
    <property type="term" value="P:G protein-coupled receptor signaling pathway"/>
    <property type="evidence" value="ECO:0007669"/>
    <property type="project" value="TreeGrafter"/>
</dbReference>
<dbReference type="CDD" id="cd00069">
    <property type="entry name" value="GHB_like"/>
    <property type="match status" value="1"/>
</dbReference>
<dbReference type="Gene3D" id="2.10.90.10">
    <property type="entry name" value="Cystine-knot cytokines"/>
    <property type="match status" value="1"/>
</dbReference>
<dbReference type="InterPro" id="IPR029034">
    <property type="entry name" value="Cystine-knot_cytokine"/>
</dbReference>
<dbReference type="InterPro" id="IPR006208">
    <property type="entry name" value="Glyco_hormone_CN"/>
</dbReference>
<dbReference type="InterPro" id="IPR001545">
    <property type="entry name" value="Gonadotropin_bsu"/>
</dbReference>
<dbReference type="PANTHER" id="PTHR11515:SF13">
    <property type="entry name" value="GLYCOPROTEIN HORMONE BETA 5, ISOFORM A"/>
    <property type="match status" value="1"/>
</dbReference>
<dbReference type="PANTHER" id="PTHR11515">
    <property type="entry name" value="GLYCOPROTEIN HORMONE BETA CHAIN"/>
    <property type="match status" value="1"/>
</dbReference>
<dbReference type="Pfam" id="PF00007">
    <property type="entry name" value="Cys_knot"/>
    <property type="match status" value="1"/>
</dbReference>
<dbReference type="SUPFAM" id="SSF57501">
    <property type="entry name" value="Cystine-knot cytokines"/>
    <property type="match status" value="1"/>
</dbReference>
<evidence type="ECO:0000250" key="1">
    <source>
        <dbReference type="UniProtKB" id="Q86YW7"/>
    </source>
</evidence>
<evidence type="ECO:0000250" key="2">
    <source>
        <dbReference type="UniProtKB" id="Q96T91"/>
    </source>
</evidence>
<evidence type="ECO:0000255" key="3"/>
<evidence type="ECO:0000303" key="4">
    <source>
    </source>
</evidence>
<evidence type="ECO:0000305" key="5">
    <source>
    </source>
</evidence>
<sequence length="135" mass="14802">MVMPLVLSLALTPPPLCHATLVDPRTTLQCHVRSYTFRATKPPIVNENGDPVTCQGDVRVSSCWGRCDSSEIGDYKMPFKISNHPVCTYTGRVSRTVRLSQCAGYPDPTVQVFDATGCACQFCNSETQLCEKLNG</sequence>
<reference key="1">
    <citation type="journal article" date="2014" name="PLoS ONE">
        <title>Diversity of conotoxin gene superfamilies in the venomous snail, Conus victoriae.</title>
        <authorList>
            <person name="Robinson S.D."/>
            <person name="Safavi-Hemami H."/>
            <person name="McIntosh L.D."/>
            <person name="Purcell A.W."/>
            <person name="Norton R.S."/>
            <person name="Papenfuss A.T."/>
        </authorList>
    </citation>
    <scope>NUCLEOTIDE SEQUENCE [MRNA]</scope>
</reference>
<reference key="2">
    <citation type="journal article" date="2017" name="Gen. Comp. Endocrinol.">
        <title>Hormone-like peptides in the venoms of marine cone snails.</title>
        <authorList>
            <person name="Robinson S.D."/>
            <person name="Li Q."/>
            <person name="Bandyopadhyay P.K."/>
            <person name="Gajewiak J."/>
            <person name="Yandell M."/>
            <person name="Papenfuss A.T."/>
            <person name="Purcell A.W."/>
            <person name="Norton R.S."/>
            <person name="Safavi-Hemami H."/>
        </authorList>
    </citation>
    <scope>NUCLEOTIDE SEQUENCE [MRNA]</scope>
    <source>
        <tissue>Venom gland</tissue>
    </source>
</reference>
<name>CTHB5_CONVC</name>
<comment type="subunit">
    <text evidence="1">Heterodimer with GPHA2; non-covalently-linked.</text>
</comment>
<comment type="subcellular location">
    <subcellularLocation>
        <location evidence="1">Secreted</location>
    </subcellularLocation>
</comment>
<comment type="tissue specificity">
    <text evidence="5">Expressed by the venom duct.</text>
</comment>
<comment type="similarity">
    <text evidence="2 5">Belongs to the glycoprotein hormones subunit beta family.</text>
</comment>
<organism>
    <name type="scientific">Conus victoriae</name>
    <name type="common">Queen Victoria cone</name>
    <dbReference type="NCBI Taxonomy" id="319920"/>
    <lineage>
        <taxon>Eukaryota</taxon>
        <taxon>Metazoa</taxon>
        <taxon>Spiralia</taxon>
        <taxon>Lophotrochozoa</taxon>
        <taxon>Mollusca</taxon>
        <taxon>Gastropoda</taxon>
        <taxon>Caenogastropoda</taxon>
        <taxon>Neogastropoda</taxon>
        <taxon>Conoidea</taxon>
        <taxon>Conidae</taxon>
        <taxon>Conus</taxon>
        <taxon>Cylinder</taxon>
    </lineage>
</organism>
<protein>
    <recommendedName>
        <fullName evidence="4">Thyrostimulin beta-5 subunit</fullName>
    </recommendedName>
</protein>
<feature type="signal peptide" evidence="3">
    <location>
        <begin position="1"/>
        <end position="19"/>
    </location>
</feature>
<feature type="chain" id="PRO_5002525607" description="Thyrostimulin beta-5 subunit" evidence="1">
    <location>
        <begin position="20"/>
        <end position="135"/>
    </location>
</feature>
<feature type="disulfide bond" evidence="3">
    <location>
        <begin position="30"/>
        <end position="87"/>
    </location>
</feature>
<feature type="disulfide bond" evidence="3">
    <location>
        <begin position="54"/>
        <end position="102"/>
    </location>
</feature>
<feature type="disulfide bond" evidence="3">
    <location>
        <begin position="63"/>
        <end position="118"/>
    </location>
</feature>
<feature type="disulfide bond" evidence="3">
    <location>
        <begin position="67"/>
        <end position="120"/>
    </location>
</feature>
<feature type="disulfide bond" evidence="3">
    <location>
        <begin position="123"/>
        <end position="130"/>
    </location>
</feature>